<sequence length="85" mass="10309">MHQENLLALIALSALCLINVLIWLFNLRIYLVQRKQDRREQEILERLRRIKEIRDDSDYESNEEEQQEVMELIHSHGFANPMFEL</sequence>
<feature type="chain" id="PRO_0000244327" description="Protein Vpu">
    <location>
        <begin position="1"/>
        <end position="85"/>
    </location>
</feature>
<feature type="topological domain" description="Extracellular" evidence="1">
    <location>
        <begin position="1"/>
        <end position="7"/>
    </location>
</feature>
<feature type="transmembrane region" description="Helical" evidence="1">
    <location>
        <begin position="8"/>
        <end position="28"/>
    </location>
</feature>
<feature type="topological domain" description="Cytoplasmic" evidence="1">
    <location>
        <begin position="29"/>
        <end position="85"/>
    </location>
</feature>
<keyword id="KW-0014">AIDS</keyword>
<keyword id="KW-0053">Apoptosis</keyword>
<keyword id="KW-1043">Host membrane</keyword>
<keyword id="KW-0945">Host-virus interaction</keyword>
<keyword id="KW-1090">Inhibition of host innate immune response by virus</keyword>
<keyword id="KW-1084">Inhibition of host tetherin by virus</keyword>
<keyword id="KW-0407">Ion channel</keyword>
<keyword id="KW-0406">Ion transport</keyword>
<keyword id="KW-0472">Membrane</keyword>
<keyword id="KW-0597">Phosphoprotein</keyword>
<keyword id="KW-0812">Transmembrane</keyword>
<keyword id="KW-1133">Transmembrane helix</keyword>
<keyword id="KW-0813">Transport</keyword>
<keyword id="KW-0899">Viral immunoevasion</keyword>
<gene>
    <name evidence="1" type="primary">vpu</name>
</gene>
<comment type="function">
    <text evidence="1">Enhances virion budding by targeting host CD4 and Tetherin/BST2 to proteasome degradation. Degradation of CD4 prevents any unwanted premature interactions between viral Env and its host receptor CD4 in the endoplasmic reticulum. Degradation of antiretroviral protein Tetherin/BST2 is important for virion budding, as BST2 tethers new viral particles to the host cell membrane. Mechanistically, Vpu bridges either CD4 or BST2 to BTRC, a substrate recognition subunit of the Skp1/Cullin/F-box protein E3 ubiquitin ligase, induces their ubiquitination and subsequent proteasomal degradation. The alteration of the E3 ligase specificity by Vpu seems to promote the degradation of host IKBKB, leading to NF-kappa-B down-regulation and subsequent apoptosis. Acts as a viroporin that forms an oligomeric ion channel in membranes. Modulates the host DNA repair mechanisms to promote degradation of nuclear viral cDNA in cells that are already productively infected in order to suppress immune sensing and proviral hyper-integration (superinfection). Manipulates PML-NBs and modulates SUMOylation of host BLM protein thereby enhancing its DNA-end processing activity toward viral unintegrated linear DNA. Also inhibits RAD52-mediated homologous repair of viral cDNA, preventing the generation of dead-end circular forms of single copies of the long terminal repeat and permitting sustained nucleolytic attack.</text>
</comment>
<comment type="activity regulation">
    <text evidence="1">Ion channel activity is inhibited by hexamethylene amiloride in vitro.</text>
</comment>
<comment type="subunit">
    <text evidence="1">Homopentamer. Interacts with host CD4 and BRTC; these interactions induce proteasomal degradation of CD4. Interacts with host BST2; this interaction leads to the degradation of host BST2. Interacts with host FBXW11. Interacts with host AP1M1; this interaction plays a role in the mistrafficking and subsequent degradation of host BST2. Interacts with host RANBP2; this interaction allows Vpu to down-regulate host BLM sumoylation.</text>
</comment>
<comment type="subcellular location">
    <subcellularLocation>
        <location evidence="1">Host membrane</location>
        <topology evidence="1">Single-pass type I membrane protein</topology>
    </subcellularLocation>
</comment>
<comment type="domain">
    <text evidence="1">The N-terminus and transmembrane domains are required for self-oligomerization and proper virion budding, whereas the cytoplasmic domain is required for CD4 degradation. The cytoplasmic domain is composed of 2 amphipathic alpha helix that form a U-shape.</text>
</comment>
<comment type="PTM">
    <text evidence="1">Phosphorylated by host CK2. This phosphorylation is necessary for interaction with human BTRC and degradation of CD4.</text>
</comment>
<comment type="miscellaneous">
    <text evidence="1">HIV-1 lineages are divided in three main groups, M (for Major), O (for Outlier), and N (for New, or Non-M, Non-O). The vast majority of strains found worldwide belong to the group M. Group O seems to be endemic to and largely confined to Cameroon and neighboring countries in West Central Africa, where these viruses represent a small minority of HIV-1 strains. The group N is represented by a limited number of isolates from Cameroonian persons. The group M is further subdivided in 9 clades or subtypes (A to D, F to H, J and K).</text>
</comment>
<comment type="similarity">
    <text evidence="1">Belongs to the HIV-1 VPU protein family.</text>
</comment>
<dbReference type="EMBL" id="L20571">
    <property type="protein sequence ID" value="AAA44863.1"/>
    <property type="molecule type" value="Genomic_RNA"/>
</dbReference>
<dbReference type="SMR" id="Q79669"/>
<dbReference type="Proteomes" id="UP000007698">
    <property type="component" value="Segment"/>
</dbReference>
<dbReference type="GO" id="GO:0033644">
    <property type="term" value="C:host cell membrane"/>
    <property type="evidence" value="ECO:0007669"/>
    <property type="project" value="UniProtKB-SubCell"/>
</dbReference>
<dbReference type="GO" id="GO:0016020">
    <property type="term" value="C:membrane"/>
    <property type="evidence" value="ECO:0007669"/>
    <property type="project" value="UniProtKB-UniRule"/>
</dbReference>
<dbReference type="GO" id="GO:0042609">
    <property type="term" value="F:CD4 receptor binding"/>
    <property type="evidence" value="ECO:0007669"/>
    <property type="project" value="UniProtKB-UniRule"/>
</dbReference>
<dbReference type="GO" id="GO:0005261">
    <property type="term" value="F:monoatomic cation channel activity"/>
    <property type="evidence" value="ECO:0007669"/>
    <property type="project" value="UniProtKB-UniRule"/>
</dbReference>
<dbReference type="GO" id="GO:0032801">
    <property type="term" value="P:receptor catabolic process"/>
    <property type="evidence" value="ECO:0007669"/>
    <property type="project" value="UniProtKB-UniRule"/>
</dbReference>
<dbReference type="GO" id="GO:0052170">
    <property type="term" value="P:symbiont-mediated suppression of host innate immune response"/>
    <property type="evidence" value="ECO:0007669"/>
    <property type="project" value="UniProtKB-KW"/>
</dbReference>
<dbReference type="GO" id="GO:0039502">
    <property type="term" value="P:symbiont-mediated suppression of host type I interferon-mediated signaling pathway"/>
    <property type="evidence" value="ECO:0007669"/>
    <property type="project" value="UniProtKB-UniRule"/>
</dbReference>
<dbReference type="GO" id="GO:0039587">
    <property type="term" value="P:symbiont-mediated-mediated suppression of host tetherin activity"/>
    <property type="evidence" value="ECO:0007669"/>
    <property type="project" value="UniProtKB-UniRule"/>
</dbReference>
<dbReference type="GO" id="GO:0019076">
    <property type="term" value="P:viral release from host cell"/>
    <property type="evidence" value="ECO:0007669"/>
    <property type="project" value="UniProtKB-UniRule"/>
</dbReference>
<dbReference type="HAMAP" id="MF_04082">
    <property type="entry name" value="HIV_VPU"/>
    <property type="match status" value="1"/>
</dbReference>
<dbReference type="InterPro" id="IPR008187">
    <property type="entry name" value="Vpu"/>
</dbReference>
<dbReference type="Pfam" id="PF00558">
    <property type="entry name" value="Vpu"/>
    <property type="match status" value="1"/>
</dbReference>
<organism>
    <name type="scientific">Human immunodeficiency virus type 1 group O (isolate MVP5180)</name>
    <name type="common">HIV-1</name>
    <dbReference type="NCBI Taxonomy" id="388816"/>
    <lineage>
        <taxon>Viruses</taxon>
        <taxon>Riboviria</taxon>
        <taxon>Pararnavirae</taxon>
        <taxon>Artverviricota</taxon>
        <taxon>Revtraviricetes</taxon>
        <taxon>Ortervirales</taxon>
        <taxon>Retroviridae</taxon>
        <taxon>Orthoretrovirinae</taxon>
        <taxon>Lentivirus</taxon>
        <taxon>Human immunodeficiency virus type 1</taxon>
    </lineage>
</organism>
<evidence type="ECO:0000255" key="1">
    <source>
        <dbReference type="HAMAP-Rule" id="MF_04082"/>
    </source>
</evidence>
<organismHost>
    <name type="scientific">Homo sapiens</name>
    <name type="common">Human</name>
    <dbReference type="NCBI Taxonomy" id="9606"/>
</organismHost>
<protein>
    <recommendedName>
        <fullName evidence="1">Protein Vpu</fullName>
    </recommendedName>
    <alternativeName>
        <fullName evidence="1">U ORF protein</fullName>
    </alternativeName>
    <alternativeName>
        <fullName evidence="1">Viral protein U</fullName>
    </alternativeName>
</protein>
<reference key="1">
    <citation type="journal article" date="1994" name="J. Virol.">
        <title>A new subtype of human immunodeficiency virus type 1 (MVP-5180) from Cameroon.</title>
        <authorList>
            <person name="Gurtler L.G."/>
            <person name="Hauser P.H."/>
            <person name="Eberle J."/>
            <person name="von Brunn A."/>
            <person name="Knapp S."/>
            <person name="Zekeng L."/>
            <person name="Tsague J.M."/>
            <person name="Kaptue L."/>
        </authorList>
    </citation>
    <scope>NUCLEOTIDE SEQUENCE [GENOMIC RNA]</scope>
</reference>
<name>VPU_HV1MV</name>
<proteinExistence type="inferred from homology"/>
<accession>Q79669</accession>